<reference key="1">
    <citation type="journal article" date="2012" name="PLoS ONE">
        <title>Characterization of profilin polymorphism in pollen with a focus on multifunctionality.</title>
        <authorList>
            <person name="Jimenez-Lopez J.C."/>
            <person name="Morales S."/>
            <person name="Castro A.J."/>
            <person name="Volkmann D."/>
            <person name="Rodriguez-Garcia M.I."/>
            <person name="Alche Jde D."/>
        </authorList>
    </citation>
    <scope>NUCLEOTIDE SEQUENCE [MRNA]</scope>
    <scope>POLYMORPHISM</scope>
    <source>
        <strain>cv. Acebuche</strain>
        <tissue>Pollen</tissue>
    </source>
</reference>
<reference key="2">
    <citation type="journal article" date="2013" name="PLoS ONE">
        <title>Analysis of the effects of polymorphism on pollen profilin structural functionality and the generation of conformational, T- and B-cell epitopes.</title>
        <authorList>
            <person name="Jimenez-Lopez J.C."/>
            <person name="Rodriguez-Garcia M.I."/>
            <person name="Alche J.D."/>
        </authorList>
    </citation>
    <scope>3D-STRUCTURE MODELING</scope>
    <scope>DISULFIDE BOND</scope>
</reference>
<organism>
    <name type="scientific">Olea europaea</name>
    <name type="common">Common olive</name>
    <dbReference type="NCBI Taxonomy" id="4146"/>
    <lineage>
        <taxon>Eukaryota</taxon>
        <taxon>Viridiplantae</taxon>
        <taxon>Streptophyta</taxon>
        <taxon>Embryophyta</taxon>
        <taxon>Tracheophyta</taxon>
        <taxon>Spermatophyta</taxon>
        <taxon>Magnoliopsida</taxon>
        <taxon>eudicotyledons</taxon>
        <taxon>Gunneridae</taxon>
        <taxon>Pentapetalae</taxon>
        <taxon>asterids</taxon>
        <taxon>lamiids</taxon>
        <taxon>Lamiales</taxon>
        <taxon>Oleaceae</taxon>
        <taxon>Oleeae</taxon>
        <taxon>Olea</taxon>
    </lineage>
</organism>
<comment type="function">
    <text evidence="1">Binds to actin and affects the structure of the cytoskeleton. At high concentrations, profilin prevents the polymerization of actin, whereas it enhances it at low concentrations (By similarity).</text>
</comment>
<comment type="subunit">
    <text evidence="1">Occurs in many kinds of cells as a complex with monomeric actin in a 1:1 ratio.</text>
</comment>
<comment type="subcellular location">
    <subcellularLocation>
        <location evidence="1">Cytoplasm</location>
        <location evidence="1">Cytoskeleton</location>
    </subcellularLocation>
</comment>
<comment type="PTM">
    <text evidence="1">Phosphorylated by MAP kinases.</text>
</comment>
<comment type="polymorphism">
    <text>Several isoforms of the allergen exist due to polymorphism.</text>
</comment>
<comment type="allergen">
    <text>Causes an allergic reaction in human.</text>
</comment>
<comment type="miscellaneous">
    <text evidence="3">The variability of the residues taking part of IgE-binding epitopes might be responsible of the difference in cross-reactivity among olive pollen cultivars, and between distantly related pollen species, leading to a variable range of allergy reactions among atopic patients.</text>
</comment>
<comment type="similarity">
    <text evidence="2">Belongs to the profilin family.</text>
</comment>
<proteinExistence type="evidence at protein level"/>
<protein>
    <recommendedName>
        <fullName>Profilin-1</fullName>
    </recommendedName>
    <alternativeName>
        <fullName>Pollen allergen Ole e 2</fullName>
    </alternativeName>
    <allergenName>Ole e 2</allergenName>
</protein>
<evidence type="ECO:0000250" key="1"/>
<evidence type="ECO:0000305" key="2"/>
<evidence type="ECO:0000305" key="3">
    <source>
    </source>
</evidence>
<dbReference type="EMBL" id="DQ138355">
    <property type="protein sequence ID" value="AAZ30433.1"/>
    <property type="molecule type" value="mRNA"/>
</dbReference>
<dbReference type="EMBL" id="DQ138356">
    <property type="protein sequence ID" value="AAZ30434.1"/>
    <property type="molecule type" value="mRNA"/>
</dbReference>
<dbReference type="SMR" id="P0DKF0"/>
<dbReference type="GO" id="GO:0005938">
    <property type="term" value="C:cell cortex"/>
    <property type="evidence" value="ECO:0007669"/>
    <property type="project" value="TreeGrafter"/>
</dbReference>
<dbReference type="GO" id="GO:0005856">
    <property type="term" value="C:cytoskeleton"/>
    <property type="evidence" value="ECO:0007669"/>
    <property type="project" value="UniProtKB-SubCell"/>
</dbReference>
<dbReference type="GO" id="GO:0003785">
    <property type="term" value="F:actin monomer binding"/>
    <property type="evidence" value="ECO:0007669"/>
    <property type="project" value="TreeGrafter"/>
</dbReference>
<dbReference type="CDD" id="cd00148">
    <property type="entry name" value="PROF"/>
    <property type="match status" value="1"/>
</dbReference>
<dbReference type="FunFam" id="3.30.450.30:FF:000001">
    <property type="entry name" value="Profilin"/>
    <property type="match status" value="1"/>
</dbReference>
<dbReference type="Gene3D" id="3.30.450.30">
    <property type="entry name" value="Dynein light chain 2a, cytoplasmic"/>
    <property type="match status" value="1"/>
</dbReference>
<dbReference type="InterPro" id="IPR048278">
    <property type="entry name" value="PFN"/>
</dbReference>
<dbReference type="InterPro" id="IPR005455">
    <property type="entry name" value="PFN_euk"/>
</dbReference>
<dbReference type="InterPro" id="IPR036140">
    <property type="entry name" value="PFN_sf"/>
</dbReference>
<dbReference type="InterPro" id="IPR027310">
    <property type="entry name" value="Profilin_CS"/>
</dbReference>
<dbReference type="PANTHER" id="PTHR11604">
    <property type="entry name" value="PROFILIN"/>
    <property type="match status" value="1"/>
</dbReference>
<dbReference type="PANTHER" id="PTHR11604:SF25">
    <property type="entry name" value="PROFILIN-5"/>
    <property type="match status" value="1"/>
</dbReference>
<dbReference type="Pfam" id="PF00235">
    <property type="entry name" value="Profilin"/>
    <property type="match status" value="1"/>
</dbReference>
<dbReference type="PRINTS" id="PR00392">
    <property type="entry name" value="PROFILIN"/>
</dbReference>
<dbReference type="PRINTS" id="PR01640">
    <property type="entry name" value="PROFILINPLNT"/>
</dbReference>
<dbReference type="SMART" id="SM00392">
    <property type="entry name" value="PROF"/>
    <property type="match status" value="1"/>
</dbReference>
<dbReference type="SUPFAM" id="SSF55770">
    <property type="entry name" value="Profilin (actin-binding protein)"/>
    <property type="match status" value="1"/>
</dbReference>
<dbReference type="PROSITE" id="PS00414">
    <property type="entry name" value="PROFILIN"/>
    <property type="match status" value="1"/>
</dbReference>
<sequence length="134" mass="14383">MSWQAYVDDHLMCDIEGHEGHRLTAAAIVGHDGSVWAQSATFPQFKPEEMNGIMTDFNEPGHLAPTGLHLGGTKYMVIQGEAGAVIRGKKGSGGITIKKTGQALVCGIYEEPVTPGQCNMVVERLGDYLLEQGL</sequence>
<keyword id="KW-0009">Actin-binding</keyword>
<keyword id="KW-0020">Allergen</keyword>
<keyword id="KW-0963">Cytoplasm</keyword>
<keyword id="KW-0206">Cytoskeleton</keyword>
<keyword id="KW-1015">Disulfide bond</keyword>
<keyword id="KW-0597">Phosphoprotein</keyword>
<name>PROAF_OLEEU</name>
<feature type="initiator methionine" description="Removed" evidence="1">
    <location>
        <position position="1"/>
    </location>
</feature>
<feature type="chain" id="PRO_0000424997" description="Profilin-1">
    <location>
        <begin position="2"/>
        <end position="134"/>
    </location>
</feature>
<feature type="short sequence motif" description="Involved in PIP2 interaction">
    <location>
        <begin position="84"/>
        <end position="100"/>
    </location>
</feature>
<feature type="modified residue" description="Phosphothreonine" evidence="1">
    <location>
        <position position="114"/>
    </location>
</feature>
<feature type="disulfide bond" evidence="3">
    <location>
        <begin position="13"/>
        <end position="118"/>
    </location>
</feature>
<accession>P0DKF0</accession>
<accession>A4GD57</accession>